<dbReference type="EMBL" id="LT708304">
    <property type="protein sequence ID" value="SIT99251.1"/>
    <property type="molecule type" value="Genomic_DNA"/>
</dbReference>
<dbReference type="RefSeq" id="NP_854311.1">
    <property type="nucleotide sequence ID" value="NC_002945.3"/>
</dbReference>
<dbReference type="SMR" id="P0A5W3"/>
<dbReference type="KEGG" id="mbo:BQ2027_MB0653"/>
<dbReference type="PATRIC" id="fig|233413.5.peg.713"/>
<dbReference type="PRO" id="PR:P0A5W3"/>
<dbReference type="Proteomes" id="UP000001419">
    <property type="component" value="Chromosome"/>
</dbReference>
<dbReference type="GO" id="GO:0005737">
    <property type="term" value="C:cytoplasm"/>
    <property type="evidence" value="ECO:0007669"/>
    <property type="project" value="UniProtKB-ARBA"/>
</dbReference>
<dbReference type="GO" id="GO:1990904">
    <property type="term" value="C:ribonucleoprotein complex"/>
    <property type="evidence" value="ECO:0007669"/>
    <property type="project" value="UniProtKB-KW"/>
</dbReference>
<dbReference type="GO" id="GO:0005840">
    <property type="term" value="C:ribosome"/>
    <property type="evidence" value="ECO:0007669"/>
    <property type="project" value="UniProtKB-KW"/>
</dbReference>
<dbReference type="GO" id="GO:0003735">
    <property type="term" value="F:structural constituent of ribosome"/>
    <property type="evidence" value="ECO:0007669"/>
    <property type="project" value="InterPro"/>
</dbReference>
<dbReference type="GO" id="GO:0006412">
    <property type="term" value="P:translation"/>
    <property type="evidence" value="ECO:0007669"/>
    <property type="project" value="UniProtKB-UniRule"/>
</dbReference>
<dbReference type="Gene3D" id="2.20.28.120">
    <property type="entry name" value="Ribosomal protein L33"/>
    <property type="match status" value="1"/>
</dbReference>
<dbReference type="HAMAP" id="MF_00294">
    <property type="entry name" value="Ribosomal_bL33"/>
    <property type="match status" value="1"/>
</dbReference>
<dbReference type="InterPro" id="IPR001705">
    <property type="entry name" value="Ribosomal_bL33"/>
</dbReference>
<dbReference type="InterPro" id="IPR018264">
    <property type="entry name" value="Ribosomal_bL33_CS"/>
</dbReference>
<dbReference type="InterPro" id="IPR038584">
    <property type="entry name" value="Ribosomal_bL33_sf"/>
</dbReference>
<dbReference type="InterPro" id="IPR011332">
    <property type="entry name" value="Ribosomal_zn-bd"/>
</dbReference>
<dbReference type="NCBIfam" id="NF001764">
    <property type="entry name" value="PRK00504.1"/>
    <property type="match status" value="1"/>
</dbReference>
<dbReference type="NCBIfam" id="NF001860">
    <property type="entry name" value="PRK00595.1"/>
    <property type="match status" value="1"/>
</dbReference>
<dbReference type="NCBIfam" id="TIGR01023">
    <property type="entry name" value="rpmG_bact"/>
    <property type="match status" value="1"/>
</dbReference>
<dbReference type="PANTHER" id="PTHR43168">
    <property type="entry name" value="50S RIBOSOMAL PROTEIN L33, CHLOROPLASTIC"/>
    <property type="match status" value="1"/>
</dbReference>
<dbReference type="PANTHER" id="PTHR43168:SF2">
    <property type="entry name" value="LARGE RIBOSOMAL SUBUNIT PROTEIN BL33C"/>
    <property type="match status" value="1"/>
</dbReference>
<dbReference type="Pfam" id="PF00471">
    <property type="entry name" value="Ribosomal_L33"/>
    <property type="match status" value="1"/>
</dbReference>
<dbReference type="SUPFAM" id="SSF57829">
    <property type="entry name" value="Zn-binding ribosomal proteins"/>
    <property type="match status" value="1"/>
</dbReference>
<dbReference type="PROSITE" id="PS00582">
    <property type="entry name" value="RIBOSOMAL_L33"/>
    <property type="match status" value="1"/>
</dbReference>
<comment type="similarity">
    <text evidence="2">Belongs to the bacterial ribosomal protein bL33 family.</text>
</comment>
<accession>P0A5W3</accession>
<accession>A0A1R3XVY4</accession>
<accession>P96925</accession>
<accession>X2BFN0</accession>
<reference key="1">
    <citation type="journal article" date="2003" name="Proc. Natl. Acad. Sci. U.S.A.">
        <title>The complete genome sequence of Mycobacterium bovis.</title>
        <authorList>
            <person name="Garnier T."/>
            <person name="Eiglmeier K."/>
            <person name="Camus J.-C."/>
            <person name="Medina N."/>
            <person name="Mansoor H."/>
            <person name="Pryor M."/>
            <person name="Duthoy S."/>
            <person name="Grondin S."/>
            <person name="Lacroix C."/>
            <person name="Monsempe C."/>
            <person name="Simon S."/>
            <person name="Harris B."/>
            <person name="Atkin R."/>
            <person name="Doggett J."/>
            <person name="Mayes R."/>
            <person name="Keating L."/>
            <person name="Wheeler P.R."/>
            <person name="Parkhill J."/>
            <person name="Barrell B.G."/>
            <person name="Cole S.T."/>
            <person name="Gordon S.V."/>
            <person name="Hewinson R.G."/>
        </authorList>
    </citation>
    <scope>NUCLEOTIDE SEQUENCE [LARGE SCALE GENOMIC DNA]</scope>
    <source>
        <strain>ATCC BAA-935 / AF2122/97</strain>
    </source>
</reference>
<reference key="2">
    <citation type="journal article" date="2017" name="Genome Announc.">
        <title>Updated reference genome sequence and annotation of Mycobacterium bovis AF2122/97.</title>
        <authorList>
            <person name="Malone K.M."/>
            <person name="Farrell D."/>
            <person name="Stuber T.P."/>
            <person name="Schubert O.T."/>
            <person name="Aebersold R."/>
            <person name="Robbe-Austerman S."/>
            <person name="Gordon S.V."/>
        </authorList>
    </citation>
    <scope>NUCLEOTIDE SEQUENCE [LARGE SCALE GENOMIC DNA]</scope>
    <scope>GENOME REANNOTATION</scope>
    <source>
        <strain>ATCC BAA-935 / AF2122/97</strain>
    </source>
</reference>
<feature type="chain" id="PRO_0000170184" description="Large ribosomal subunit protein bL33B">
    <location>
        <begin position="1"/>
        <end position="55"/>
    </location>
</feature>
<sequence>MASSTDVRPKITLACEVCKHRNYITKKNRRNDPDRLELKKFCPNCGKHQAHRETR</sequence>
<gene>
    <name type="primary">rpmG2</name>
    <name type="ordered locus">BQ2027_MB0653</name>
</gene>
<keyword id="KW-1185">Reference proteome</keyword>
<keyword id="KW-0687">Ribonucleoprotein</keyword>
<keyword id="KW-0689">Ribosomal protein</keyword>
<protein>
    <recommendedName>
        <fullName evidence="1">Large ribosomal subunit protein bL33B</fullName>
    </recommendedName>
    <alternativeName>
        <fullName>50S ribosomal protein L33 2</fullName>
    </alternativeName>
</protein>
<proteinExistence type="inferred from homology"/>
<name>RL332_MYCBO</name>
<organism>
    <name type="scientific">Mycobacterium bovis (strain ATCC BAA-935 / AF2122/97)</name>
    <dbReference type="NCBI Taxonomy" id="233413"/>
    <lineage>
        <taxon>Bacteria</taxon>
        <taxon>Bacillati</taxon>
        <taxon>Actinomycetota</taxon>
        <taxon>Actinomycetes</taxon>
        <taxon>Mycobacteriales</taxon>
        <taxon>Mycobacteriaceae</taxon>
        <taxon>Mycobacterium</taxon>
        <taxon>Mycobacterium tuberculosis complex</taxon>
    </lineage>
</organism>
<evidence type="ECO:0000255" key="1">
    <source>
        <dbReference type="HAMAP-Rule" id="MF_00294"/>
    </source>
</evidence>
<evidence type="ECO:0000305" key="2"/>